<protein>
    <recommendedName>
        <fullName evidence="1">Lipoprotein signal peptidase</fullName>
        <ecNumber evidence="1">3.4.23.36</ecNumber>
    </recommendedName>
    <alternativeName>
        <fullName evidence="1">Prolipoprotein signal peptidase</fullName>
    </alternativeName>
    <alternativeName>
        <fullName evidence="1">Signal peptidase II</fullName>
        <shortName evidence="1">SPase II</shortName>
    </alternativeName>
</protein>
<evidence type="ECO:0000255" key="1">
    <source>
        <dbReference type="HAMAP-Rule" id="MF_00161"/>
    </source>
</evidence>
<reference key="1">
    <citation type="journal article" date="2007" name="BMC Microbiol.">
        <title>Subtle genetic changes enhance virulence of methicillin resistant and sensitive Staphylococcus aureus.</title>
        <authorList>
            <person name="Highlander S.K."/>
            <person name="Hulten K.G."/>
            <person name="Qin X."/>
            <person name="Jiang H."/>
            <person name="Yerrapragada S."/>
            <person name="Mason E.O. Jr."/>
            <person name="Shang Y."/>
            <person name="Williams T.M."/>
            <person name="Fortunov R.M."/>
            <person name="Liu Y."/>
            <person name="Igboeli O."/>
            <person name="Petrosino J."/>
            <person name="Tirumalai M."/>
            <person name="Uzman A."/>
            <person name="Fox G.E."/>
            <person name="Cardenas A.M."/>
            <person name="Muzny D.M."/>
            <person name="Hemphill L."/>
            <person name="Ding Y."/>
            <person name="Dugan S."/>
            <person name="Blyth P.R."/>
            <person name="Buhay C.J."/>
            <person name="Dinh H.H."/>
            <person name="Hawes A.C."/>
            <person name="Holder M."/>
            <person name="Kovar C.L."/>
            <person name="Lee S.L."/>
            <person name="Liu W."/>
            <person name="Nazareth L.V."/>
            <person name="Wang Q."/>
            <person name="Zhou J."/>
            <person name="Kaplan S.L."/>
            <person name="Weinstock G.M."/>
        </authorList>
    </citation>
    <scope>NUCLEOTIDE SEQUENCE [LARGE SCALE GENOMIC DNA]</scope>
    <source>
        <strain>USA300 / TCH1516</strain>
    </source>
</reference>
<proteinExistence type="inferred from homology"/>
<gene>
    <name evidence="1" type="primary">lspA</name>
    <name type="ordered locus">USA300HOU_1133</name>
</gene>
<comment type="function">
    <text evidence="1">This protein specifically catalyzes the removal of signal peptides from prolipoproteins.</text>
</comment>
<comment type="catalytic activity">
    <reaction evidence="1">
        <text>Release of signal peptides from bacterial membrane prolipoproteins. Hydrolyzes -Xaa-Yaa-Zaa-|-(S,diacylglyceryl)Cys-, in which Xaa is hydrophobic (preferably Leu), and Yaa (Ala or Ser) and Zaa (Gly or Ala) have small, neutral side chains.</text>
        <dbReference type="EC" id="3.4.23.36"/>
    </reaction>
</comment>
<comment type="pathway">
    <text evidence="1">Protein modification; lipoprotein biosynthesis (signal peptide cleavage).</text>
</comment>
<comment type="subcellular location">
    <subcellularLocation>
        <location evidence="1">Cell membrane</location>
        <topology evidence="1">Multi-pass membrane protein</topology>
    </subcellularLocation>
</comment>
<comment type="similarity">
    <text evidence="1">Belongs to the peptidase A8 family.</text>
</comment>
<dbReference type="EC" id="3.4.23.36" evidence="1"/>
<dbReference type="EMBL" id="CP000730">
    <property type="protein sequence ID" value="ABX29149.1"/>
    <property type="molecule type" value="Genomic_DNA"/>
</dbReference>
<dbReference type="RefSeq" id="WP_000549207.1">
    <property type="nucleotide sequence ID" value="NC_010079.1"/>
</dbReference>
<dbReference type="SMR" id="A8Z3N3"/>
<dbReference type="KEGG" id="sax:USA300HOU_1133"/>
<dbReference type="HOGENOM" id="CLU_083252_3_0_9"/>
<dbReference type="UniPathway" id="UPA00665"/>
<dbReference type="GO" id="GO:0005886">
    <property type="term" value="C:plasma membrane"/>
    <property type="evidence" value="ECO:0007669"/>
    <property type="project" value="UniProtKB-SubCell"/>
</dbReference>
<dbReference type="GO" id="GO:0004190">
    <property type="term" value="F:aspartic-type endopeptidase activity"/>
    <property type="evidence" value="ECO:0007669"/>
    <property type="project" value="UniProtKB-UniRule"/>
</dbReference>
<dbReference type="GO" id="GO:0006508">
    <property type="term" value="P:proteolysis"/>
    <property type="evidence" value="ECO:0007669"/>
    <property type="project" value="UniProtKB-KW"/>
</dbReference>
<dbReference type="HAMAP" id="MF_00161">
    <property type="entry name" value="LspA"/>
    <property type="match status" value="1"/>
</dbReference>
<dbReference type="InterPro" id="IPR001872">
    <property type="entry name" value="Peptidase_A8"/>
</dbReference>
<dbReference type="NCBIfam" id="TIGR00077">
    <property type="entry name" value="lspA"/>
    <property type="match status" value="1"/>
</dbReference>
<dbReference type="PANTHER" id="PTHR33695">
    <property type="entry name" value="LIPOPROTEIN SIGNAL PEPTIDASE"/>
    <property type="match status" value="1"/>
</dbReference>
<dbReference type="PANTHER" id="PTHR33695:SF1">
    <property type="entry name" value="LIPOPROTEIN SIGNAL PEPTIDASE"/>
    <property type="match status" value="1"/>
</dbReference>
<dbReference type="Pfam" id="PF01252">
    <property type="entry name" value="Peptidase_A8"/>
    <property type="match status" value="1"/>
</dbReference>
<dbReference type="PRINTS" id="PR00781">
    <property type="entry name" value="LIPOSIGPTASE"/>
</dbReference>
<dbReference type="PROSITE" id="PS00855">
    <property type="entry name" value="SPASE_II"/>
    <property type="match status" value="1"/>
</dbReference>
<organism>
    <name type="scientific">Staphylococcus aureus (strain USA300 / TCH1516)</name>
    <dbReference type="NCBI Taxonomy" id="451516"/>
    <lineage>
        <taxon>Bacteria</taxon>
        <taxon>Bacillati</taxon>
        <taxon>Bacillota</taxon>
        <taxon>Bacilli</taxon>
        <taxon>Bacillales</taxon>
        <taxon>Staphylococcaceae</taxon>
        <taxon>Staphylococcus</taxon>
    </lineage>
</organism>
<accession>A8Z3N3</accession>
<name>LSPA_STAAT</name>
<keyword id="KW-0064">Aspartyl protease</keyword>
<keyword id="KW-1003">Cell membrane</keyword>
<keyword id="KW-0378">Hydrolase</keyword>
<keyword id="KW-0472">Membrane</keyword>
<keyword id="KW-0645">Protease</keyword>
<keyword id="KW-0812">Transmembrane</keyword>
<keyword id="KW-1133">Transmembrane helix</keyword>
<feature type="chain" id="PRO_1000076936" description="Lipoprotein signal peptidase">
    <location>
        <begin position="1"/>
        <end position="163"/>
    </location>
</feature>
<feature type="transmembrane region" description="Helical" evidence="1">
    <location>
        <begin position="11"/>
        <end position="31"/>
    </location>
</feature>
<feature type="transmembrane region" description="Helical" evidence="1">
    <location>
        <begin position="63"/>
        <end position="83"/>
    </location>
</feature>
<feature type="transmembrane region" description="Helical" evidence="1">
    <location>
        <begin position="88"/>
        <end position="108"/>
    </location>
</feature>
<feature type="transmembrane region" description="Helical" evidence="1">
    <location>
        <begin position="131"/>
        <end position="151"/>
    </location>
</feature>
<feature type="active site" evidence="1">
    <location>
        <position position="118"/>
    </location>
</feature>
<feature type="active site" evidence="1">
    <location>
        <position position="136"/>
    </location>
</feature>
<sequence>MHKKYFIGTSILIAVFVVIFDQVTKYIIATTMKIGDSFEVIPHFLNITSHRNNGAAWGILSGKMTFFFIITIIILIALVYFFIKDAQYNLFMQVAISLLFAGALGNFIDRILTGEVVDFIDTNIFGYDFPIFNIADSSLTIGVILIIIALLKDTSNKKEKEVK</sequence>